<dbReference type="EC" id="2.4.1.227" evidence="1"/>
<dbReference type="EMBL" id="CP000378">
    <property type="protein sequence ID" value="ABF74992.1"/>
    <property type="molecule type" value="Genomic_DNA"/>
</dbReference>
<dbReference type="SMR" id="Q1BZG3"/>
<dbReference type="CAZy" id="GT28">
    <property type="family name" value="Glycosyltransferase Family 28"/>
</dbReference>
<dbReference type="HOGENOM" id="CLU_037404_2_0_4"/>
<dbReference type="UniPathway" id="UPA00219"/>
<dbReference type="GO" id="GO:0005886">
    <property type="term" value="C:plasma membrane"/>
    <property type="evidence" value="ECO:0007669"/>
    <property type="project" value="UniProtKB-SubCell"/>
</dbReference>
<dbReference type="GO" id="GO:0051991">
    <property type="term" value="F:UDP-N-acetyl-D-glucosamine:N-acetylmuramoyl-L-alanyl-D-glutamyl-meso-2,6-diaminopimelyl-D-alanyl-D-alanine-diphosphoundecaprenol 4-beta-N-acetylglucosaminlytransferase activity"/>
    <property type="evidence" value="ECO:0007669"/>
    <property type="project" value="RHEA"/>
</dbReference>
<dbReference type="GO" id="GO:0050511">
    <property type="term" value="F:undecaprenyldiphospho-muramoylpentapeptide beta-N-acetylglucosaminyltransferase activity"/>
    <property type="evidence" value="ECO:0007669"/>
    <property type="project" value="UniProtKB-UniRule"/>
</dbReference>
<dbReference type="GO" id="GO:0005975">
    <property type="term" value="P:carbohydrate metabolic process"/>
    <property type="evidence" value="ECO:0007669"/>
    <property type="project" value="InterPro"/>
</dbReference>
<dbReference type="GO" id="GO:0051301">
    <property type="term" value="P:cell division"/>
    <property type="evidence" value="ECO:0007669"/>
    <property type="project" value="UniProtKB-KW"/>
</dbReference>
<dbReference type="GO" id="GO:0071555">
    <property type="term" value="P:cell wall organization"/>
    <property type="evidence" value="ECO:0007669"/>
    <property type="project" value="UniProtKB-KW"/>
</dbReference>
<dbReference type="GO" id="GO:0030259">
    <property type="term" value="P:lipid glycosylation"/>
    <property type="evidence" value="ECO:0007669"/>
    <property type="project" value="UniProtKB-UniRule"/>
</dbReference>
<dbReference type="GO" id="GO:0009252">
    <property type="term" value="P:peptidoglycan biosynthetic process"/>
    <property type="evidence" value="ECO:0007669"/>
    <property type="project" value="UniProtKB-UniRule"/>
</dbReference>
<dbReference type="GO" id="GO:0008360">
    <property type="term" value="P:regulation of cell shape"/>
    <property type="evidence" value="ECO:0007669"/>
    <property type="project" value="UniProtKB-KW"/>
</dbReference>
<dbReference type="CDD" id="cd03785">
    <property type="entry name" value="GT28_MurG"/>
    <property type="match status" value="1"/>
</dbReference>
<dbReference type="Gene3D" id="3.40.50.2000">
    <property type="entry name" value="Glycogen Phosphorylase B"/>
    <property type="match status" value="2"/>
</dbReference>
<dbReference type="HAMAP" id="MF_00033">
    <property type="entry name" value="MurG"/>
    <property type="match status" value="1"/>
</dbReference>
<dbReference type="InterPro" id="IPR006009">
    <property type="entry name" value="GlcNAc_MurG"/>
</dbReference>
<dbReference type="InterPro" id="IPR007235">
    <property type="entry name" value="Glyco_trans_28_C"/>
</dbReference>
<dbReference type="InterPro" id="IPR004276">
    <property type="entry name" value="GlycoTrans_28_N"/>
</dbReference>
<dbReference type="NCBIfam" id="TIGR01133">
    <property type="entry name" value="murG"/>
    <property type="match status" value="1"/>
</dbReference>
<dbReference type="PANTHER" id="PTHR21015:SF22">
    <property type="entry name" value="GLYCOSYLTRANSFERASE"/>
    <property type="match status" value="1"/>
</dbReference>
<dbReference type="PANTHER" id="PTHR21015">
    <property type="entry name" value="UDP-N-ACETYLGLUCOSAMINE--N-ACETYLMURAMYL-(PENTAPEPTIDE) PYROPHOSPHORYL-UNDECAPRENOL N-ACETYLGLUCOSAMINE TRANSFERASE 1"/>
    <property type="match status" value="1"/>
</dbReference>
<dbReference type="Pfam" id="PF04101">
    <property type="entry name" value="Glyco_tran_28_C"/>
    <property type="match status" value="1"/>
</dbReference>
<dbReference type="Pfam" id="PF03033">
    <property type="entry name" value="Glyco_transf_28"/>
    <property type="match status" value="1"/>
</dbReference>
<dbReference type="SUPFAM" id="SSF53756">
    <property type="entry name" value="UDP-Glycosyltransferase/glycogen phosphorylase"/>
    <property type="match status" value="1"/>
</dbReference>
<keyword id="KW-0131">Cell cycle</keyword>
<keyword id="KW-0132">Cell division</keyword>
<keyword id="KW-0997">Cell inner membrane</keyword>
<keyword id="KW-1003">Cell membrane</keyword>
<keyword id="KW-0133">Cell shape</keyword>
<keyword id="KW-0961">Cell wall biogenesis/degradation</keyword>
<keyword id="KW-0328">Glycosyltransferase</keyword>
<keyword id="KW-0472">Membrane</keyword>
<keyword id="KW-0573">Peptidoglycan synthesis</keyword>
<keyword id="KW-0808">Transferase</keyword>
<accession>Q1BZG3</accession>
<organism>
    <name type="scientific">Burkholderia orbicola (strain AU 1054)</name>
    <dbReference type="NCBI Taxonomy" id="331271"/>
    <lineage>
        <taxon>Bacteria</taxon>
        <taxon>Pseudomonadati</taxon>
        <taxon>Pseudomonadota</taxon>
        <taxon>Betaproteobacteria</taxon>
        <taxon>Burkholderiales</taxon>
        <taxon>Burkholderiaceae</taxon>
        <taxon>Burkholderia</taxon>
        <taxon>Burkholderia cepacia complex</taxon>
        <taxon>Burkholderia orbicola</taxon>
    </lineage>
</organism>
<proteinExistence type="inferred from homology"/>
<gene>
    <name evidence="1" type="primary">murG</name>
    <name type="ordered locus">Bcen_0077</name>
</gene>
<protein>
    <recommendedName>
        <fullName evidence="1">UDP-N-acetylglucosamine--N-acetylmuramyl-(pentapeptide) pyrophosphoryl-undecaprenol N-acetylglucosamine transferase</fullName>
        <ecNumber evidence="1">2.4.1.227</ecNumber>
    </recommendedName>
    <alternativeName>
        <fullName evidence="1">Undecaprenyl-PP-MurNAc-pentapeptide-UDPGlcNAc GlcNAc transferase</fullName>
    </alternativeName>
</protein>
<reference key="1">
    <citation type="submission" date="2006-05" db="EMBL/GenBank/DDBJ databases">
        <title>Complete sequence of chromosome 1 of Burkholderia cenocepacia AU 1054.</title>
        <authorList>
            <consortium name="US DOE Joint Genome Institute"/>
            <person name="Copeland A."/>
            <person name="Lucas S."/>
            <person name="Lapidus A."/>
            <person name="Barry K."/>
            <person name="Detter J.C."/>
            <person name="Glavina del Rio T."/>
            <person name="Hammon N."/>
            <person name="Israni S."/>
            <person name="Dalin E."/>
            <person name="Tice H."/>
            <person name="Pitluck S."/>
            <person name="Chain P."/>
            <person name="Malfatti S."/>
            <person name="Shin M."/>
            <person name="Vergez L."/>
            <person name="Schmutz J."/>
            <person name="Larimer F."/>
            <person name="Land M."/>
            <person name="Hauser L."/>
            <person name="Kyrpides N."/>
            <person name="Lykidis A."/>
            <person name="LiPuma J.J."/>
            <person name="Konstantinidis K."/>
            <person name="Tiedje J.M."/>
            <person name="Richardson P."/>
        </authorList>
    </citation>
    <scope>NUCLEOTIDE SEQUENCE [LARGE SCALE GENOMIC DNA]</scope>
    <source>
        <strain>AU 1054</strain>
    </source>
</reference>
<evidence type="ECO:0000255" key="1">
    <source>
        <dbReference type="HAMAP-Rule" id="MF_00033"/>
    </source>
</evidence>
<name>MURG_BURO1</name>
<comment type="function">
    <text evidence="1">Cell wall formation. Catalyzes the transfer of a GlcNAc subunit on undecaprenyl-pyrophosphoryl-MurNAc-pentapeptide (lipid intermediate I) to form undecaprenyl-pyrophosphoryl-MurNAc-(pentapeptide)GlcNAc (lipid intermediate II).</text>
</comment>
<comment type="catalytic activity">
    <reaction evidence="1">
        <text>di-trans,octa-cis-undecaprenyl diphospho-N-acetyl-alpha-D-muramoyl-L-alanyl-D-glutamyl-meso-2,6-diaminopimeloyl-D-alanyl-D-alanine + UDP-N-acetyl-alpha-D-glucosamine = di-trans,octa-cis-undecaprenyl diphospho-[N-acetyl-alpha-D-glucosaminyl-(1-&gt;4)]-N-acetyl-alpha-D-muramoyl-L-alanyl-D-glutamyl-meso-2,6-diaminopimeloyl-D-alanyl-D-alanine + UDP + H(+)</text>
        <dbReference type="Rhea" id="RHEA:31227"/>
        <dbReference type="ChEBI" id="CHEBI:15378"/>
        <dbReference type="ChEBI" id="CHEBI:57705"/>
        <dbReference type="ChEBI" id="CHEBI:58223"/>
        <dbReference type="ChEBI" id="CHEBI:61387"/>
        <dbReference type="ChEBI" id="CHEBI:61388"/>
        <dbReference type="EC" id="2.4.1.227"/>
    </reaction>
</comment>
<comment type="pathway">
    <text evidence="1">Cell wall biogenesis; peptidoglycan biosynthesis.</text>
</comment>
<comment type="subcellular location">
    <subcellularLocation>
        <location evidence="1">Cell inner membrane</location>
        <topology evidence="1">Peripheral membrane protein</topology>
        <orientation evidence="1">Cytoplasmic side</orientation>
    </subcellularLocation>
</comment>
<comment type="similarity">
    <text evidence="1">Belongs to the glycosyltransferase 28 family. MurG subfamily.</text>
</comment>
<sequence>MTASQRTLMVMAGGTGGHVFPGLAVAHRMEAAGWRVVWLGNPAGMEATLVPKHGIPMEYVRFGGLRGKGLKTKLTLPVNLLRACWQSLGALRRVRPDVVLGMGGYITFPAGVMTALSGRPLVLHEQNSIAGLTNKVLAKLAKRVLVAFPGALPHAEWTGNPIRAELAHTEPPHARYASRSGPLNVLVVGGSLGAAALNEVVPRALALLAPGERPRVVHQAGVKHIEALKANYEAAGFAAGEDVRLVPFIDDMAAAYAAADLVICRSGAMTVSEIAAVGVAALFVPFPYAVDDHQTTNAAFLAEAGAAVLVQQRDLSAELLADWLRGQSRASLADMAERSRALAKPEATDEVARVCAKAAGANLETLQ</sequence>
<feature type="chain" id="PRO_1000002621" description="UDP-N-acetylglucosamine--N-acetylmuramyl-(pentapeptide) pyrophosphoryl-undecaprenol N-acetylglucosamine transferase">
    <location>
        <begin position="1"/>
        <end position="367"/>
    </location>
</feature>
<feature type="binding site" evidence="1">
    <location>
        <begin position="15"/>
        <end position="17"/>
    </location>
    <ligand>
        <name>UDP-N-acetyl-alpha-D-glucosamine</name>
        <dbReference type="ChEBI" id="CHEBI:57705"/>
    </ligand>
</feature>
<feature type="binding site" evidence="1">
    <location>
        <position position="127"/>
    </location>
    <ligand>
        <name>UDP-N-acetyl-alpha-D-glucosamine</name>
        <dbReference type="ChEBI" id="CHEBI:57705"/>
    </ligand>
</feature>
<feature type="binding site" evidence="1">
    <location>
        <position position="163"/>
    </location>
    <ligand>
        <name>UDP-N-acetyl-alpha-D-glucosamine</name>
        <dbReference type="ChEBI" id="CHEBI:57705"/>
    </ligand>
</feature>
<feature type="binding site" evidence="1">
    <location>
        <position position="191"/>
    </location>
    <ligand>
        <name>UDP-N-acetyl-alpha-D-glucosamine</name>
        <dbReference type="ChEBI" id="CHEBI:57705"/>
    </ligand>
</feature>
<feature type="binding site" evidence="1">
    <location>
        <position position="249"/>
    </location>
    <ligand>
        <name>UDP-N-acetyl-alpha-D-glucosamine</name>
        <dbReference type="ChEBI" id="CHEBI:57705"/>
    </ligand>
</feature>
<feature type="binding site" evidence="1">
    <location>
        <position position="294"/>
    </location>
    <ligand>
        <name>UDP-N-acetyl-alpha-D-glucosamine</name>
        <dbReference type="ChEBI" id="CHEBI:57705"/>
    </ligand>
</feature>